<protein>
    <recommendedName>
        <fullName evidence="3">Dimodular nonribosomal peptide synthase</fullName>
        <ecNumber evidence="2">6.2.1.66</ecNumber>
        <ecNumber evidence="2">6.2.1.70</ecNumber>
    </recommendedName>
    <alternativeName>
        <fullName evidence="4">Glycine--[glycyl-carrier protein] ligase</fullName>
    </alternativeName>
    <alternativeName>
        <fullName evidence="4">L-threonine--[L-threonyl-carrier protein] ligase</fullName>
    </alternativeName>
</protein>
<accession>P45745</accession>
<accession>Q9R9I2</accession>
<organism>
    <name type="scientific">Bacillus subtilis (strain 168)</name>
    <dbReference type="NCBI Taxonomy" id="224308"/>
    <lineage>
        <taxon>Bacteria</taxon>
        <taxon>Bacillati</taxon>
        <taxon>Bacillota</taxon>
        <taxon>Bacilli</taxon>
        <taxon>Bacillales</taxon>
        <taxon>Bacillaceae</taxon>
        <taxon>Bacillus</taxon>
    </lineage>
</organism>
<feature type="chain" id="PRO_0000193081" description="Dimodular nonribosomal peptide synthase">
    <location>
        <begin position="1"/>
        <end position="2378"/>
    </location>
</feature>
<feature type="domain" description="Carrier 1" evidence="1">
    <location>
        <begin position="961"/>
        <end position="1036"/>
    </location>
</feature>
<feature type="domain" description="Carrier 2" evidence="1">
    <location>
        <begin position="2036"/>
        <end position="2111"/>
    </location>
</feature>
<feature type="modified residue" description="O-(pantetheine 4'-phosphoryl)serine" evidence="1 6">
    <location>
        <position position="996"/>
    </location>
</feature>
<feature type="modified residue" description="O-(pantetheine 4'-phosphoryl)serine" evidence="1">
    <location>
        <position position="2071"/>
    </location>
</feature>
<feature type="sequence conflict" description="In Ref. 1; AAD56240." evidence="4" ref="1">
    <original>S</original>
    <variation>G</variation>
    <location>
        <position position="2141"/>
    </location>
</feature>
<reference key="1">
    <citation type="journal article" date="2001" name="J. Biol. Chem.">
        <title>The dhb operon of Bacillus subtilis encodes the biosynthetic template for the catecholic siderophore 2,3-dihydroxybenzoate-glycine-threonine trimeric ester bacillibactin.</title>
        <authorList>
            <person name="May J.J."/>
            <person name="Wendrich T.M."/>
            <person name="Marahiel M.A."/>
        </authorList>
    </citation>
    <scope>NUCLEOTIDE SEQUENCE [GENOMIC DNA]</scope>
    <scope>FUNCTION</scope>
    <scope>CATALYTIC ACTIVITY</scope>
    <scope>PATHWAY</scope>
    <source>
        <strain>168</strain>
    </source>
</reference>
<reference key="2">
    <citation type="journal article" date="1997" name="Nature">
        <title>The complete genome sequence of the Gram-positive bacterium Bacillus subtilis.</title>
        <authorList>
            <person name="Kunst F."/>
            <person name="Ogasawara N."/>
            <person name="Moszer I."/>
            <person name="Albertini A.M."/>
            <person name="Alloni G."/>
            <person name="Azevedo V."/>
            <person name="Bertero M.G."/>
            <person name="Bessieres P."/>
            <person name="Bolotin A."/>
            <person name="Borchert S."/>
            <person name="Borriss R."/>
            <person name="Boursier L."/>
            <person name="Brans A."/>
            <person name="Braun M."/>
            <person name="Brignell S.C."/>
            <person name="Bron S."/>
            <person name="Brouillet S."/>
            <person name="Bruschi C.V."/>
            <person name="Caldwell B."/>
            <person name="Capuano V."/>
            <person name="Carter N.M."/>
            <person name="Choi S.-K."/>
            <person name="Codani J.-J."/>
            <person name="Connerton I.F."/>
            <person name="Cummings N.J."/>
            <person name="Daniel R.A."/>
            <person name="Denizot F."/>
            <person name="Devine K.M."/>
            <person name="Duesterhoeft A."/>
            <person name="Ehrlich S.D."/>
            <person name="Emmerson P.T."/>
            <person name="Entian K.-D."/>
            <person name="Errington J."/>
            <person name="Fabret C."/>
            <person name="Ferrari E."/>
            <person name="Foulger D."/>
            <person name="Fritz C."/>
            <person name="Fujita M."/>
            <person name="Fujita Y."/>
            <person name="Fuma S."/>
            <person name="Galizzi A."/>
            <person name="Galleron N."/>
            <person name="Ghim S.-Y."/>
            <person name="Glaser P."/>
            <person name="Goffeau A."/>
            <person name="Golightly E.J."/>
            <person name="Grandi G."/>
            <person name="Guiseppi G."/>
            <person name="Guy B.J."/>
            <person name="Haga K."/>
            <person name="Haiech J."/>
            <person name="Harwood C.R."/>
            <person name="Henaut A."/>
            <person name="Hilbert H."/>
            <person name="Holsappel S."/>
            <person name="Hosono S."/>
            <person name="Hullo M.-F."/>
            <person name="Itaya M."/>
            <person name="Jones L.-M."/>
            <person name="Joris B."/>
            <person name="Karamata D."/>
            <person name="Kasahara Y."/>
            <person name="Klaerr-Blanchard M."/>
            <person name="Klein C."/>
            <person name="Kobayashi Y."/>
            <person name="Koetter P."/>
            <person name="Koningstein G."/>
            <person name="Krogh S."/>
            <person name="Kumano M."/>
            <person name="Kurita K."/>
            <person name="Lapidus A."/>
            <person name="Lardinois S."/>
            <person name="Lauber J."/>
            <person name="Lazarevic V."/>
            <person name="Lee S.-M."/>
            <person name="Levine A."/>
            <person name="Liu H."/>
            <person name="Masuda S."/>
            <person name="Mauel C."/>
            <person name="Medigue C."/>
            <person name="Medina N."/>
            <person name="Mellado R.P."/>
            <person name="Mizuno M."/>
            <person name="Moestl D."/>
            <person name="Nakai S."/>
            <person name="Noback M."/>
            <person name="Noone D."/>
            <person name="O'Reilly M."/>
            <person name="Ogawa K."/>
            <person name="Ogiwara A."/>
            <person name="Oudega B."/>
            <person name="Park S.-H."/>
            <person name="Parro V."/>
            <person name="Pohl T.M."/>
            <person name="Portetelle D."/>
            <person name="Porwollik S."/>
            <person name="Prescott A.M."/>
            <person name="Presecan E."/>
            <person name="Pujic P."/>
            <person name="Purnelle B."/>
            <person name="Rapoport G."/>
            <person name="Rey M."/>
            <person name="Reynolds S."/>
            <person name="Rieger M."/>
            <person name="Rivolta C."/>
            <person name="Rocha E."/>
            <person name="Roche B."/>
            <person name="Rose M."/>
            <person name="Sadaie Y."/>
            <person name="Sato T."/>
            <person name="Scanlan E."/>
            <person name="Schleich S."/>
            <person name="Schroeter R."/>
            <person name="Scoffone F."/>
            <person name="Sekiguchi J."/>
            <person name="Sekowska A."/>
            <person name="Seror S.J."/>
            <person name="Serror P."/>
            <person name="Shin B.-S."/>
            <person name="Soldo B."/>
            <person name="Sorokin A."/>
            <person name="Tacconi E."/>
            <person name="Takagi T."/>
            <person name="Takahashi H."/>
            <person name="Takemaru K."/>
            <person name="Takeuchi M."/>
            <person name="Tamakoshi A."/>
            <person name="Tanaka T."/>
            <person name="Terpstra P."/>
            <person name="Tognoni A."/>
            <person name="Tosato V."/>
            <person name="Uchiyama S."/>
            <person name="Vandenbol M."/>
            <person name="Vannier F."/>
            <person name="Vassarotti A."/>
            <person name="Viari A."/>
            <person name="Wambutt R."/>
            <person name="Wedler E."/>
            <person name="Wedler H."/>
            <person name="Weitzenegger T."/>
            <person name="Winters P."/>
            <person name="Wipat A."/>
            <person name="Yamamoto H."/>
            <person name="Yamane K."/>
            <person name="Yasumoto K."/>
            <person name="Yata K."/>
            <person name="Yoshida K."/>
            <person name="Yoshikawa H.-F."/>
            <person name="Zumstein E."/>
            <person name="Yoshikawa H."/>
            <person name="Danchin A."/>
        </authorList>
    </citation>
    <scope>NUCLEOTIDE SEQUENCE [LARGE SCALE GENOMIC DNA]</scope>
    <source>
        <strain>168</strain>
    </source>
</reference>
<reference key="3">
    <citation type="journal article" date="1999" name="Genome Res.">
        <title>Detecting and analyzing DNA sequencing errors: toward a higher quality of the Bacillus subtilis genome sequence.</title>
        <authorList>
            <person name="Medigue C."/>
            <person name="Rose M."/>
            <person name="Viari A."/>
            <person name="Danchin A."/>
        </authorList>
    </citation>
    <scope>SEQUENCE REVISION</scope>
</reference>
<reference key="4">
    <citation type="journal article" date="2009" name="Microbiology">
        <title>From a consortium sequence to a unified sequence: the Bacillus subtilis 168 reference genome a decade later.</title>
        <authorList>
            <person name="Barbe V."/>
            <person name="Cruveiller S."/>
            <person name="Kunst F."/>
            <person name="Lenoble P."/>
            <person name="Meurice G."/>
            <person name="Sekowska A."/>
            <person name="Vallenet D."/>
            <person name="Wang T."/>
            <person name="Moszer I."/>
            <person name="Medigue C."/>
            <person name="Danchin A."/>
        </authorList>
    </citation>
    <scope>SEQUENCE REVISION TO 2141</scope>
</reference>
<reference key="5">
    <citation type="journal article" date="1996" name="J. Bacteriol.">
        <title>Duplicate isochorismate synthase genes of Bacillus subtilis: regulation and involvement in the biosyntheses of menaquinone and 2,3-dihydroxybenzoate.</title>
        <authorList>
            <person name="Rowland B.M."/>
            <person name="Taber H.W."/>
        </authorList>
    </citation>
    <scope>NUCLEOTIDE SEQUENCE [GENOMIC DNA] OF 1-95</scope>
    <source>
        <strain>168 / Marburg / ATCC 6051 / DSM 10 / JCM 1465 / NBRC 13719 / NCIMB 3610 / NRRL NRS-744 / VKM B-501</strain>
    </source>
</reference>
<reference key="6">
    <citation type="journal article" date="2007" name="Mol. Cell. Proteomics">
        <title>The serine/threonine/tyrosine phosphoproteome of the model bacterium Bacillus subtilis.</title>
        <authorList>
            <person name="Macek B."/>
            <person name="Mijakovic I."/>
            <person name="Olsen J.V."/>
            <person name="Gnad F."/>
            <person name="Kumar C."/>
            <person name="Jensen P.R."/>
            <person name="Mann M."/>
        </authorList>
    </citation>
    <scope>PHOSPHOPANTETHEINYLATION [LARGE SCALE ANALYSIS] AT SER-996</scope>
    <scope>IDENTIFICATION BY MASS SPECTROMETRY</scope>
    <source>
        <strain>168</strain>
    </source>
</reference>
<keyword id="KW-0436">Ligase</keyword>
<keyword id="KW-0596">Phosphopantetheine</keyword>
<keyword id="KW-0597">Phosphoprotein</keyword>
<keyword id="KW-1185">Reference proteome</keyword>
<keyword id="KW-0677">Repeat</keyword>
<comment type="function">
    <text evidence="2">Specifically adenylates L-threonine and, to a lesser extent, glycine and covalently loads both amino acids onto their corresponding peptidyl carrier domains.</text>
</comment>
<comment type="catalytic activity">
    <reaction evidence="2">
        <text>holo-[peptidyl-carrier protein] + L-threonine + ATP = L-threonyl-[peptidyl-carrier protein] + AMP + diphosphate</text>
        <dbReference type="Rhea" id="RHEA:61688"/>
        <dbReference type="Rhea" id="RHEA-COMP:11480"/>
        <dbReference type="Rhea" id="RHEA-COMP:15908"/>
        <dbReference type="ChEBI" id="CHEBI:30616"/>
        <dbReference type="ChEBI" id="CHEBI:33019"/>
        <dbReference type="ChEBI" id="CHEBI:57926"/>
        <dbReference type="ChEBI" id="CHEBI:64479"/>
        <dbReference type="ChEBI" id="CHEBI:144927"/>
        <dbReference type="ChEBI" id="CHEBI:456215"/>
        <dbReference type="EC" id="6.2.1.70"/>
    </reaction>
    <physiologicalReaction direction="left-to-right" evidence="2">
        <dbReference type="Rhea" id="RHEA:61689"/>
    </physiologicalReaction>
</comment>
<comment type="catalytic activity">
    <reaction evidence="2">
        <text>holo-[peptidyl-carrier protein] + glycine + ATP = glycyl-[peptidyl-carrier protein] + AMP + diphosphate</text>
        <dbReference type="Rhea" id="RHEA:61696"/>
        <dbReference type="Rhea" id="RHEA-COMP:11480"/>
        <dbReference type="Rhea" id="RHEA-COMP:15909"/>
        <dbReference type="ChEBI" id="CHEBI:30616"/>
        <dbReference type="ChEBI" id="CHEBI:33019"/>
        <dbReference type="ChEBI" id="CHEBI:57305"/>
        <dbReference type="ChEBI" id="CHEBI:64479"/>
        <dbReference type="ChEBI" id="CHEBI:144951"/>
        <dbReference type="ChEBI" id="CHEBI:456215"/>
        <dbReference type="EC" id="6.2.1.66"/>
    </reaction>
    <physiologicalReaction direction="left-to-right" evidence="2">
        <dbReference type="Rhea" id="RHEA:61697"/>
    </physiologicalReaction>
</comment>
<comment type="cofactor">
    <cofactor evidence="4">
        <name>pantetheine 4'-phosphate</name>
        <dbReference type="ChEBI" id="CHEBI:47942"/>
    </cofactor>
</comment>
<comment type="pathway">
    <text evidence="5">Siderophore biosynthesis; bacillibactin biosynthesis.</text>
</comment>
<comment type="similarity">
    <text evidence="4">Belongs to the ATP-dependent AMP-binding enzyme family.</text>
</comment>
<comment type="caution">
    <text evidence="4">The phosphoserine observed at Ser-996 in PubMed:17218307 undoubtedly results from the secondary neutral loss of pantetheine from the phosphodiester linked cofactor.</text>
</comment>
<dbReference type="EC" id="6.2.1.66" evidence="2"/>
<dbReference type="EC" id="6.2.1.70" evidence="2"/>
<dbReference type="EMBL" id="AF184977">
    <property type="protein sequence ID" value="AAD56240.1"/>
    <property type="molecule type" value="Genomic_DNA"/>
</dbReference>
<dbReference type="EMBL" id="AL009126">
    <property type="protein sequence ID" value="CAB15186.3"/>
    <property type="molecule type" value="Genomic_DNA"/>
</dbReference>
<dbReference type="EMBL" id="U26444">
    <property type="protein sequence ID" value="AAC44634.1"/>
    <property type="molecule type" value="Genomic_DNA"/>
</dbReference>
<dbReference type="PIR" id="E69615">
    <property type="entry name" value="E69615"/>
</dbReference>
<dbReference type="RefSeq" id="NP_391076.3">
    <property type="nucleotide sequence ID" value="NC_000964.3"/>
</dbReference>
<dbReference type="RefSeq" id="WP_009968094.1">
    <property type="nucleotide sequence ID" value="NZ_OZ025638.1"/>
</dbReference>
<dbReference type="SMR" id="P45745"/>
<dbReference type="FunCoup" id="P45745">
    <property type="interactions" value="25"/>
</dbReference>
<dbReference type="IntAct" id="P45745">
    <property type="interactions" value="3"/>
</dbReference>
<dbReference type="MINT" id="P45745"/>
<dbReference type="STRING" id="224308.BSU31960"/>
<dbReference type="ESTHER" id="bacsu-YUKL">
    <property type="family name" value="Thioesterase"/>
</dbReference>
<dbReference type="jPOST" id="P45745"/>
<dbReference type="PaxDb" id="224308-BSU31960"/>
<dbReference type="EnsemblBacteria" id="CAB15186">
    <property type="protein sequence ID" value="CAB15186"/>
    <property type="gene ID" value="BSU_31960"/>
</dbReference>
<dbReference type="GeneID" id="936569"/>
<dbReference type="KEGG" id="bsu:BSU31960"/>
<dbReference type="PATRIC" id="fig|224308.179.peg.3462"/>
<dbReference type="eggNOG" id="COG1020">
    <property type="taxonomic scope" value="Bacteria"/>
</dbReference>
<dbReference type="InParanoid" id="P45745"/>
<dbReference type="OrthoDB" id="9765680at2"/>
<dbReference type="PhylomeDB" id="P45745"/>
<dbReference type="BioCyc" id="BSUB:BSU31960-MONOMER"/>
<dbReference type="BioCyc" id="MetaCyc:MONOMER-13921"/>
<dbReference type="BRENDA" id="6.2.1.66">
    <property type="organism ID" value="658"/>
</dbReference>
<dbReference type="UniPathway" id="UPA00013"/>
<dbReference type="Proteomes" id="UP000001570">
    <property type="component" value="Chromosome"/>
</dbReference>
<dbReference type="GO" id="GO:0016874">
    <property type="term" value="F:ligase activity"/>
    <property type="evidence" value="ECO:0007669"/>
    <property type="project" value="UniProtKB-KW"/>
</dbReference>
<dbReference type="GO" id="GO:0031177">
    <property type="term" value="F:phosphopantetheine binding"/>
    <property type="evidence" value="ECO:0007669"/>
    <property type="project" value="InterPro"/>
</dbReference>
<dbReference type="GO" id="GO:0008610">
    <property type="term" value="P:lipid biosynthetic process"/>
    <property type="evidence" value="ECO:0007669"/>
    <property type="project" value="UniProtKB-ARBA"/>
</dbReference>
<dbReference type="GO" id="GO:0044550">
    <property type="term" value="P:secondary metabolite biosynthetic process"/>
    <property type="evidence" value="ECO:0007669"/>
    <property type="project" value="UniProtKB-ARBA"/>
</dbReference>
<dbReference type="CDD" id="cd17643">
    <property type="entry name" value="A_NRPS_Cytc1-like"/>
    <property type="match status" value="1"/>
</dbReference>
<dbReference type="CDD" id="cd12116">
    <property type="entry name" value="A_NRPS_Ta1_like"/>
    <property type="match status" value="1"/>
</dbReference>
<dbReference type="CDD" id="cd19538">
    <property type="entry name" value="LCL_NRPS"/>
    <property type="match status" value="1"/>
</dbReference>
<dbReference type="CDD" id="cd19533">
    <property type="entry name" value="starter-C_NRPS"/>
    <property type="match status" value="1"/>
</dbReference>
<dbReference type="FunFam" id="3.30.300.30:FF:000010">
    <property type="entry name" value="Enterobactin synthetase component F"/>
    <property type="match status" value="2"/>
</dbReference>
<dbReference type="FunFam" id="3.40.50.980:FF:000002">
    <property type="entry name" value="Enterobactin synthetase component F"/>
    <property type="match status" value="1"/>
</dbReference>
<dbReference type="FunFam" id="1.10.1200.10:FF:000016">
    <property type="entry name" value="Non-ribosomal peptide synthase"/>
    <property type="match status" value="1"/>
</dbReference>
<dbReference type="FunFam" id="3.30.559.10:FF:000012">
    <property type="entry name" value="Non-ribosomal peptide synthetase"/>
    <property type="match status" value="1"/>
</dbReference>
<dbReference type="FunFam" id="3.30.559.30:FF:000001">
    <property type="entry name" value="Non-ribosomal peptide synthetase"/>
    <property type="match status" value="1"/>
</dbReference>
<dbReference type="FunFam" id="3.40.50.12780:FF:000012">
    <property type="entry name" value="Non-ribosomal peptide synthetase"/>
    <property type="match status" value="2"/>
</dbReference>
<dbReference type="FunFam" id="3.40.50.980:FF:000001">
    <property type="entry name" value="Non-ribosomal peptide synthetase"/>
    <property type="match status" value="2"/>
</dbReference>
<dbReference type="FunFam" id="2.30.38.10:FF:000001">
    <property type="entry name" value="Non-ribosomal peptide synthetase PvdI"/>
    <property type="match status" value="2"/>
</dbReference>
<dbReference type="FunFam" id="1.10.1200.10:FF:000005">
    <property type="entry name" value="Nonribosomal peptide synthetase 1"/>
    <property type="match status" value="1"/>
</dbReference>
<dbReference type="Gene3D" id="3.30.300.30">
    <property type="match status" value="2"/>
</dbReference>
<dbReference type="Gene3D" id="3.40.50.980">
    <property type="match status" value="4"/>
</dbReference>
<dbReference type="Gene3D" id="1.10.1200.10">
    <property type="entry name" value="ACP-like"/>
    <property type="match status" value="1"/>
</dbReference>
<dbReference type="Gene3D" id="3.40.50.1820">
    <property type="entry name" value="alpha/beta hydrolase"/>
    <property type="match status" value="1"/>
</dbReference>
<dbReference type="Gene3D" id="3.30.559.10">
    <property type="entry name" value="Chloramphenicol acetyltransferase-like domain"/>
    <property type="match status" value="2"/>
</dbReference>
<dbReference type="Gene3D" id="2.30.38.10">
    <property type="entry name" value="Luciferase, Domain 3"/>
    <property type="match status" value="2"/>
</dbReference>
<dbReference type="Gene3D" id="3.30.559.30">
    <property type="entry name" value="Nonribosomal peptide synthetase, condensation domain"/>
    <property type="match status" value="3"/>
</dbReference>
<dbReference type="InterPro" id="IPR010071">
    <property type="entry name" value="AA_adenyl_dom"/>
</dbReference>
<dbReference type="InterPro" id="IPR029058">
    <property type="entry name" value="AB_hydrolase_fold"/>
</dbReference>
<dbReference type="InterPro" id="IPR036736">
    <property type="entry name" value="ACP-like_sf"/>
</dbReference>
<dbReference type="InterPro" id="IPR025110">
    <property type="entry name" value="AMP-bd_C"/>
</dbReference>
<dbReference type="InterPro" id="IPR045851">
    <property type="entry name" value="AMP-bd_C_sf"/>
</dbReference>
<dbReference type="InterPro" id="IPR020845">
    <property type="entry name" value="AMP-binding_CS"/>
</dbReference>
<dbReference type="InterPro" id="IPR000873">
    <property type="entry name" value="AMP-dep_synth/lig_dom"/>
</dbReference>
<dbReference type="InterPro" id="IPR023213">
    <property type="entry name" value="CAT-like_dom_sf"/>
</dbReference>
<dbReference type="InterPro" id="IPR001242">
    <property type="entry name" value="Condensatn"/>
</dbReference>
<dbReference type="InterPro" id="IPR020806">
    <property type="entry name" value="PKS_PP-bd"/>
</dbReference>
<dbReference type="InterPro" id="IPR020802">
    <property type="entry name" value="PKS_thioesterase"/>
</dbReference>
<dbReference type="InterPro" id="IPR009081">
    <property type="entry name" value="PP-bd_ACP"/>
</dbReference>
<dbReference type="InterPro" id="IPR001031">
    <property type="entry name" value="Thioesterase"/>
</dbReference>
<dbReference type="NCBIfam" id="TIGR01733">
    <property type="entry name" value="AA-adenyl-dom"/>
    <property type="match status" value="2"/>
</dbReference>
<dbReference type="NCBIfam" id="NF003417">
    <property type="entry name" value="PRK04813.1"/>
    <property type="match status" value="2"/>
</dbReference>
<dbReference type="PANTHER" id="PTHR45527">
    <property type="entry name" value="NONRIBOSOMAL PEPTIDE SYNTHETASE"/>
    <property type="match status" value="1"/>
</dbReference>
<dbReference type="PANTHER" id="PTHR45527:SF14">
    <property type="entry name" value="PLIPASTATIN SYNTHASE SUBUNIT B"/>
    <property type="match status" value="1"/>
</dbReference>
<dbReference type="Pfam" id="PF00501">
    <property type="entry name" value="AMP-binding"/>
    <property type="match status" value="2"/>
</dbReference>
<dbReference type="Pfam" id="PF13193">
    <property type="entry name" value="AMP-binding_C"/>
    <property type="match status" value="2"/>
</dbReference>
<dbReference type="Pfam" id="PF00668">
    <property type="entry name" value="Condensation"/>
    <property type="match status" value="2"/>
</dbReference>
<dbReference type="Pfam" id="PF00550">
    <property type="entry name" value="PP-binding"/>
    <property type="match status" value="2"/>
</dbReference>
<dbReference type="Pfam" id="PF00975">
    <property type="entry name" value="Thioesterase"/>
    <property type="match status" value="1"/>
</dbReference>
<dbReference type="SMART" id="SM00823">
    <property type="entry name" value="PKS_PP"/>
    <property type="match status" value="2"/>
</dbReference>
<dbReference type="SMART" id="SM00824">
    <property type="entry name" value="PKS_TE"/>
    <property type="match status" value="1"/>
</dbReference>
<dbReference type="SUPFAM" id="SSF56801">
    <property type="entry name" value="Acetyl-CoA synthetase-like"/>
    <property type="match status" value="2"/>
</dbReference>
<dbReference type="SUPFAM" id="SSF47336">
    <property type="entry name" value="ACP-like"/>
    <property type="match status" value="2"/>
</dbReference>
<dbReference type="SUPFAM" id="SSF53474">
    <property type="entry name" value="alpha/beta-Hydrolases"/>
    <property type="match status" value="1"/>
</dbReference>
<dbReference type="SUPFAM" id="SSF52777">
    <property type="entry name" value="CoA-dependent acyltransferases"/>
    <property type="match status" value="4"/>
</dbReference>
<dbReference type="PROSITE" id="PS00455">
    <property type="entry name" value="AMP_BINDING"/>
    <property type="match status" value="2"/>
</dbReference>
<dbReference type="PROSITE" id="PS50075">
    <property type="entry name" value="CARRIER"/>
    <property type="match status" value="2"/>
</dbReference>
<gene>
    <name type="primary">dhbF</name>
    <name type="ordered locus">BSU31960</name>
</gene>
<evidence type="ECO:0000255" key="1">
    <source>
        <dbReference type="PROSITE-ProRule" id="PRU00258"/>
    </source>
</evidence>
<evidence type="ECO:0000269" key="2">
    <source>
    </source>
</evidence>
<evidence type="ECO:0000303" key="3">
    <source>
    </source>
</evidence>
<evidence type="ECO:0000305" key="4"/>
<evidence type="ECO:0000305" key="5">
    <source>
    </source>
</evidence>
<evidence type="ECO:0000305" key="6">
    <source>
    </source>
</evidence>
<sequence length="2378" mass="263770">MPDTKDLQYSLTGAQTGIWFAQQLDPDNPIYNTAEYIEINGPVNIALFEEALRHVIKEAESLHVRFGENMDGPWQMINPSPDVQLHVIDVSSEPDPEKTALNWMKADLAKPVDLGYAPLFNEALFIAGPDRFFWYQRIHHIAIDGFGFSLIAQRVASTYTALIKGQTAKSRSFGSLQAILEEDTDYRGSEQYEKDRQFWLDRFADAPEVVSLADRAPRTSNSFLRHTAYLPPSDVNALKEAARYFSGSWHEVMIAVSAVYVHRMTGSEDVVLGLPMMGRIGSASLNVPAMVMNLLPLRLTVSSSMSFSELIQQISREIRSIRRHHKYRHEELRRDLKLIGENHRLFGPQINLMPFDYGLDFAGVRGTTHNLSAGPVDDLSINVYDRTDGSGLRIDVDANPEVYSESDIKLHQQRILQLLQTASAGEDMLIGQMELLLPEEKEKVISKWNETAKSEKLVSLQDMFEKQAVLTPERIALMCDDIQVNYRKLNEEANRLARLLIEKGIGPEQFVALALPRSPEMVASMLGVLKTGAAYLPLDPEFPADRISYMLEDAKPSCIITTEEIAASLPDDLAVPELVLDQAVTQEIIKRYSPENQDVSVSLDHPAYIIYTSGSTGRPKGVVVTQKSLSNFLLSMQEAFSLGEEDRLLAVTTVAFDISALELYLPLISGAQIVIAKKETIREPQALAQMIENFDINIMQATPTLWHALVTSEPEKLRGLRVLVGGEALPSGLLQELQDLHCSVTNLYGPTETTIWSAAAFLEEGLKGVPPIGKPIWNTQVYVLDNGLQPVPPGVVGELYIAGTGLARGYFHRPDLTAERFVADPYGPPGTRMYRTGDQARWRADGSLDYIGRADHQIKIRGFRIELGEIDAVLANHPHIEQAAVVVREDQPGDKRLAAYVVADAAIDTAELRRYMGASLPDYMVPSAFVEMDELPLTPNGKLDRKALPAPDFSTSVSDRAPRTPQEEILCDLFAEVLGLARVGIDDSFFELGGHSLLAARLMSRIREVMGAELGIAKLFDEPTVAGLAAHLDLAQSACPALQRAERPEKIPLSFAQRRLWFLHCLEGPSPTYNIPVAVRLSGELDQGLLKAALYDLVCRHESLRTIFPESQGTSYQHILDADRACPELHVTEIAEKELSDRLAEAVRYSFDLAAEPAFRAELFVIGPDEYVLLLLVHHIVGDGWSLTPLTRDLGTAYAARCHGRSPEWAPLAVQYADYALWQQELLGNEDDPNSLIAGQLAFWKETLKNLPDQLELPTDYSRPAEPSHDGDTIHFRIEPEFHKRLQELARANRVSLFMVLQSGLAALLTRLGAGTDIPIGSPIAGRNDDALGDLVGLFINTLVLRTDTSGDPSFRELLDRVREVNLAAYDNQDLPFERLVEVLNPARSRATHPLFQIMLAFQNTPDAELHLPDMESSLRINSVGSAKFDLTLEISEDRLADGTPNGMEGLLEYSTDLFKRETAQALADRLMRLLEAAESDPDEQIGNLDILAPEEHSSMVTDWQSVSEKIPHACLPEQFEKQAALRPDAIAVVYENQELSYAELNERANRLARMMISEGVGPEQFVALALPRSLEMAVGLLAVLKAGAAYLPLDPDYPADRIAFMLKDAQPAFIMTNTKAANHIPPVENVPKIVLDDPELAEKLNTYPAGNPKNKDRTQPLSPLNTAYVIYTSGSTGVPKGVMIPHQNVTRLFAATEHWFRFSSGDIWTMFHSYAFDFSVWEIWGPLLHGGRLVIVPHHVSRSPEAFLRLLVKEGVTVLNQTPSAFYQFMQAEREQPDLGQALSLRYVIFGGEALELSRLEDWYNRHPENRPQLINMYGITETTVHVSYIELDRSMAALRANSLIGCGIPDLGVYVLDERLQPVPPGVAGELYVSGAGLARGYLGRPGLTSERFIADPFGPPGTRMYRTGDVARLRADGSLDYVGRADHQVKIRGFRIELGEIEAALVQHPQLEDAAVIVREDQPGDKRLAAYVIPSEETFDTAELRRYAAERLPDYMVPAAFVTMKELPLTPNGKLDRKALPAPDFAAAVTGRGPRTPQEEILCDLFMEVLHLPRVGIDDRFFDLGGHSLLAVQLMSRIREALGVELSIGNLFEAPTVAGLAERLEMGSSQSALDVLLPLRTSGDKPPLFCVHPAGGLSWCYAGLMTNIGTDYPIYGLQARGIGQREELPKTLDDMAADYIKQIRTVQPKGPYHLLGWSLGGNVVQAMATQLQNQGEEVSLLVMLDAYPNHFLPIKEAPDDEEALIALLALGGYDPDSLGEKPLDFEAAIEILRRDGSALASLDETVILNLKNTYVNSVGILGSYKPKTFRGNVLFFRSTIIPEWFDPIEPDSWKPYINGQIEQIDIDCRHKDLCQPEPLAQIGKVLAVKLEELNK</sequence>
<proteinExistence type="evidence at protein level"/>
<name>DHBF_BACSU</name>